<comment type="subunit">
    <text evidence="1">Binds to laminin.</text>
</comment>
<comment type="subcellular location">
    <subcellularLocation>
        <location evidence="1">Secreted</location>
        <location evidence="1">Extracellular space</location>
        <location evidence="1">Extracellular matrix</location>
    </subcellularLocation>
</comment>
<comment type="PTM">
    <text evidence="4">Contains keratan sulfate.</text>
</comment>
<comment type="similarity">
    <text evidence="6">Belongs to the small leucine-rich proteoglycan (SLRP) family. SLRP class II subfamily.</text>
</comment>
<evidence type="ECO:0000250" key="1"/>
<evidence type="ECO:0000250" key="2">
    <source>
        <dbReference type="UniProtKB" id="P51884"/>
    </source>
</evidence>
<evidence type="ECO:0000250" key="3">
    <source>
        <dbReference type="UniProtKB" id="P51885"/>
    </source>
</evidence>
<evidence type="ECO:0000250" key="4">
    <source>
        <dbReference type="UniProtKB" id="Q05443"/>
    </source>
</evidence>
<evidence type="ECO:0000255" key="5"/>
<evidence type="ECO:0000305" key="6"/>
<evidence type="ECO:0007744" key="7">
    <source>
    </source>
</evidence>
<sequence>MNVCTFTLVLALVGSVSGQYYDYDAPLFMYGELSPNCAPECNCPHSYPTAMYCDDLKLKSVPMVPPGIKYLYLRNNQIDHIDEKAFENVTDLQWLILDHNLLENSKIKGKVFSKLKQLKKLHINYNNLTESVGPLPKSLQDLQLANNKISKLGSFDGLVNLTFIYLQHNQLKEEAVSASLKGLKSLEYLDLSFNQMSKLPAGLPTSLLTLYLDNNKITNIPDEYFNRFTGLQYLRLSHNELADSGVPGNSFNISSLLELDLSYNKLKSIPTVNENLENYYLEVNKLEKFDVKSFCKILGPLSYSKIKHLRLDGNPLTQSSLPPDMYECLRVANEITVN</sequence>
<dbReference type="EMBL" id="X84039">
    <property type="protein sequence ID" value="CAA58858.1"/>
    <property type="molecule type" value="mRNA"/>
</dbReference>
<dbReference type="EMBL" id="BC061878">
    <property type="protein sequence ID" value="AAH61878.1"/>
    <property type="molecule type" value="mRNA"/>
</dbReference>
<dbReference type="PIR" id="S52284">
    <property type="entry name" value="S52284"/>
</dbReference>
<dbReference type="RefSeq" id="NP_112312.1">
    <property type="nucleotide sequence ID" value="NM_031050.2"/>
</dbReference>
<dbReference type="SMR" id="P51886"/>
<dbReference type="BioGRID" id="249579">
    <property type="interactions" value="1"/>
</dbReference>
<dbReference type="FunCoup" id="P51886">
    <property type="interactions" value="58"/>
</dbReference>
<dbReference type="STRING" id="10116.ENSRNOP00000006109"/>
<dbReference type="GlyCosmos" id="P51886">
    <property type="glycosylation" value="4 sites, No reported glycans"/>
</dbReference>
<dbReference type="GlyGen" id="P51886">
    <property type="glycosylation" value="4 sites"/>
</dbReference>
<dbReference type="iPTMnet" id="P51886"/>
<dbReference type="PhosphoSitePlus" id="P51886"/>
<dbReference type="SwissPalm" id="P51886"/>
<dbReference type="PaxDb" id="10116-ENSRNOP00000006109"/>
<dbReference type="Ensembl" id="ENSRNOT00000006109.5">
    <property type="protein sequence ID" value="ENSRNOP00000006109.2"/>
    <property type="gene ID" value="ENSRNOG00000004610.5"/>
</dbReference>
<dbReference type="GeneID" id="81682"/>
<dbReference type="KEGG" id="rno:81682"/>
<dbReference type="UCSC" id="RGD:620984">
    <property type="organism name" value="rat"/>
</dbReference>
<dbReference type="AGR" id="RGD:620984"/>
<dbReference type="CTD" id="4060"/>
<dbReference type="RGD" id="620984">
    <property type="gene designation" value="Lum"/>
</dbReference>
<dbReference type="eggNOG" id="KOG0619">
    <property type="taxonomic scope" value="Eukaryota"/>
</dbReference>
<dbReference type="GeneTree" id="ENSGT00940000158177"/>
<dbReference type="HOGENOM" id="CLU_000288_186_4_1"/>
<dbReference type="InParanoid" id="P51886"/>
<dbReference type="OMA" id="DCPINFP"/>
<dbReference type="OrthoDB" id="26113at9989"/>
<dbReference type="PhylomeDB" id="P51886"/>
<dbReference type="TreeFam" id="TF334562"/>
<dbReference type="Reactome" id="R-RNO-2022854">
    <property type="pathway name" value="Keratan sulfate biosynthesis"/>
</dbReference>
<dbReference type="Reactome" id="R-RNO-2022857">
    <property type="pathway name" value="Keratan sulfate degradation"/>
</dbReference>
<dbReference type="Reactome" id="R-RNO-216083">
    <property type="pathway name" value="Integrin cell surface interactions"/>
</dbReference>
<dbReference type="PRO" id="PR:P51886"/>
<dbReference type="Proteomes" id="UP000002494">
    <property type="component" value="Chromosome 7"/>
</dbReference>
<dbReference type="Bgee" id="ENSRNOG00000004610">
    <property type="expression patterns" value="Expressed in esophagus and 19 other cell types or tissues"/>
</dbReference>
<dbReference type="GO" id="GO:0031012">
    <property type="term" value="C:extracellular matrix"/>
    <property type="evidence" value="ECO:0000266"/>
    <property type="project" value="RGD"/>
</dbReference>
<dbReference type="GO" id="GO:0005615">
    <property type="term" value="C:extracellular space"/>
    <property type="evidence" value="ECO:0000318"/>
    <property type="project" value="GO_Central"/>
</dbReference>
<dbReference type="GO" id="GO:0005583">
    <property type="term" value="C:fibrillar collagen trimer"/>
    <property type="evidence" value="ECO:0000266"/>
    <property type="project" value="RGD"/>
</dbReference>
<dbReference type="GO" id="GO:0005518">
    <property type="term" value="F:collagen binding"/>
    <property type="evidence" value="ECO:0000266"/>
    <property type="project" value="RGD"/>
</dbReference>
<dbReference type="GO" id="GO:0051216">
    <property type="term" value="P:cartilage development"/>
    <property type="evidence" value="ECO:0000270"/>
    <property type="project" value="RGD"/>
</dbReference>
<dbReference type="GO" id="GO:0045944">
    <property type="term" value="P:positive regulation of transcription by RNA polymerase II"/>
    <property type="evidence" value="ECO:0000266"/>
    <property type="project" value="RGD"/>
</dbReference>
<dbReference type="GO" id="GO:0032914">
    <property type="term" value="P:positive regulation of transforming growth factor beta1 production"/>
    <property type="evidence" value="ECO:0000266"/>
    <property type="project" value="RGD"/>
</dbReference>
<dbReference type="GO" id="GO:1904010">
    <property type="term" value="P:response to Aroclor 1254"/>
    <property type="evidence" value="ECO:0000270"/>
    <property type="project" value="RGD"/>
</dbReference>
<dbReference type="GO" id="GO:0070848">
    <property type="term" value="P:response to growth factor"/>
    <property type="evidence" value="ECO:0000270"/>
    <property type="project" value="RGD"/>
</dbReference>
<dbReference type="FunFam" id="3.80.10.10:FF:000063">
    <property type="entry name" value="Lumican"/>
    <property type="match status" value="1"/>
</dbReference>
<dbReference type="FunFam" id="3.80.10.10:FF:000073">
    <property type="entry name" value="Lumican"/>
    <property type="match status" value="1"/>
</dbReference>
<dbReference type="FunFam" id="3.80.10.10:FF:000151">
    <property type="entry name" value="Lumican"/>
    <property type="match status" value="1"/>
</dbReference>
<dbReference type="Gene3D" id="3.80.10.10">
    <property type="entry name" value="Ribonuclease Inhibitor"/>
    <property type="match status" value="2"/>
</dbReference>
<dbReference type="InterPro" id="IPR001611">
    <property type="entry name" value="Leu-rich_rpt"/>
</dbReference>
<dbReference type="InterPro" id="IPR003591">
    <property type="entry name" value="Leu-rich_rpt_typical-subtyp"/>
</dbReference>
<dbReference type="InterPro" id="IPR032675">
    <property type="entry name" value="LRR_dom_sf"/>
</dbReference>
<dbReference type="InterPro" id="IPR000372">
    <property type="entry name" value="LRRNT"/>
</dbReference>
<dbReference type="InterPro" id="IPR050333">
    <property type="entry name" value="SLRP"/>
</dbReference>
<dbReference type="PANTHER" id="PTHR45712">
    <property type="entry name" value="AGAP008170-PA"/>
    <property type="match status" value="1"/>
</dbReference>
<dbReference type="PANTHER" id="PTHR45712:SF6">
    <property type="entry name" value="LUMICAN"/>
    <property type="match status" value="1"/>
</dbReference>
<dbReference type="Pfam" id="PF00560">
    <property type="entry name" value="LRR_1"/>
    <property type="match status" value="1"/>
</dbReference>
<dbReference type="Pfam" id="PF13855">
    <property type="entry name" value="LRR_8"/>
    <property type="match status" value="3"/>
</dbReference>
<dbReference type="Pfam" id="PF01462">
    <property type="entry name" value="LRRNT"/>
    <property type="match status" value="1"/>
</dbReference>
<dbReference type="PRINTS" id="PR00019">
    <property type="entry name" value="LEURICHRPT"/>
</dbReference>
<dbReference type="SMART" id="SM00364">
    <property type="entry name" value="LRR_BAC"/>
    <property type="match status" value="5"/>
</dbReference>
<dbReference type="SMART" id="SM00365">
    <property type="entry name" value="LRR_SD22"/>
    <property type="match status" value="5"/>
</dbReference>
<dbReference type="SMART" id="SM00369">
    <property type="entry name" value="LRR_TYP"/>
    <property type="match status" value="9"/>
</dbReference>
<dbReference type="SMART" id="SM00013">
    <property type="entry name" value="LRRNT"/>
    <property type="match status" value="1"/>
</dbReference>
<dbReference type="SUPFAM" id="SSF52058">
    <property type="entry name" value="L domain-like"/>
    <property type="match status" value="1"/>
</dbReference>
<dbReference type="PROSITE" id="PS51450">
    <property type="entry name" value="LRR"/>
    <property type="match status" value="10"/>
</dbReference>
<name>LUM_RAT</name>
<protein>
    <recommendedName>
        <fullName>Lumican</fullName>
    </recommendedName>
    <alternativeName>
        <fullName>Keratan sulfate proteoglycan lumican</fullName>
        <shortName>KSPG lumican</shortName>
    </alternativeName>
</protein>
<organism>
    <name type="scientific">Rattus norvegicus</name>
    <name type="common">Rat</name>
    <dbReference type="NCBI Taxonomy" id="10116"/>
    <lineage>
        <taxon>Eukaryota</taxon>
        <taxon>Metazoa</taxon>
        <taxon>Chordata</taxon>
        <taxon>Craniata</taxon>
        <taxon>Vertebrata</taxon>
        <taxon>Euteleostomi</taxon>
        <taxon>Mammalia</taxon>
        <taxon>Eutheria</taxon>
        <taxon>Euarchontoglires</taxon>
        <taxon>Glires</taxon>
        <taxon>Rodentia</taxon>
        <taxon>Myomorpha</taxon>
        <taxon>Muroidea</taxon>
        <taxon>Muridae</taxon>
        <taxon>Murinae</taxon>
        <taxon>Rattus</taxon>
    </lineage>
</organism>
<keyword id="KW-1015">Disulfide bond</keyword>
<keyword id="KW-0272">Extracellular matrix</keyword>
<keyword id="KW-0325">Glycoprotein</keyword>
<keyword id="KW-0433">Leucine-rich repeat</keyword>
<keyword id="KW-0597">Phosphoprotein</keyword>
<keyword id="KW-0654">Proteoglycan</keyword>
<keyword id="KW-0873">Pyrrolidone carboxylic acid</keyword>
<keyword id="KW-1185">Reference proteome</keyword>
<keyword id="KW-0677">Repeat</keyword>
<keyword id="KW-0964">Secreted</keyword>
<keyword id="KW-0732">Signal</keyword>
<keyword id="KW-0765">Sulfation</keyword>
<proteinExistence type="evidence at protein level"/>
<gene>
    <name type="primary">Lum</name>
    <name type="synonym">Lcn</name>
    <name type="synonym">Ldc</name>
</gene>
<reference key="1">
    <citation type="submission" date="1995-01" db="EMBL/GenBank/DDBJ databases">
        <authorList>
            <person name="Krull N.B."/>
        </authorList>
    </citation>
    <scope>NUCLEOTIDE SEQUENCE [MRNA]</scope>
    <source>
        <strain>Sprague-Dawley</strain>
        <tissue>Eye</tissue>
    </source>
</reference>
<reference key="2">
    <citation type="journal article" date="2004" name="Genome Res.">
        <title>The status, quality, and expansion of the NIH full-length cDNA project: the Mammalian Gene Collection (MGC).</title>
        <authorList>
            <consortium name="The MGC Project Team"/>
        </authorList>
    </citation>
    <scope>NUCLEOTIDE SEQUENCE [LARGE SCALE MRNA]</scope>
    <source>
        <tissue>Prostate</tissue>
    </source>
</reference>
<reference key="3">
    <citation type="journal article" date="2012" name="Nat. Commun.">
        <title>Quantitative maps of protein phosphorylation sites across 14 different rat organs and tissues.</title>
        <authorList>
            <person name="Lundby A."/>
            <person name="Secher A."/>
            <person name="Lage K."/>
            <person name="Nordsborg N.B."/>
            <person name="Dmytriyev A."/>
            <person name="Lundby C."/>
            <person name="Olsen J.V."/>
        </authorList>
    </citation>
    <scope>PHOSPHORYLATION [LARGE SCALE ANALYSIS] AT SER-304</scope>
    <scope>IDENTIFICATION BY MASS SPECTROMETRY [LARGE SCALE ANALYSIS]</scope>
</reference>
<accession>P51886</accession>
<feature type="signal peptide" evidence="1">
    <location>
        <begin position="1"/>
        <end position="18"/>
    </location>
</feature>
<feature type="chain" id="PRO_0000032735" description="Lumican">
    <location>
        <begin position="19"/>
        <end position="338"/>
    </location>
</feature>
<feature type="domain" description="LRRNT">
    <location>
        <begin position="28"/>
        <end position="66"/>
    </location>
</feature>
<feature type="repeat" description="LRR 1">
    <location>
        <begin position="67"/>
        <end position="88"/>
    </location>
</feature>
<feature type="repeat" description="LRR 2">
    <location>
        <begin position="91"/>
        <end position="114"/>
    </location>
</feature>
<feature type="repeat" description="LRR 3">
    <location>
        <begin position="117"/>
        <end position="137"/>
    </location>
</feature>
<feature type="repeat" description="LRR 4">
    <location>
        <begin position="138"/>
        <end position="159"/>
    </location>
</feature>
<feature type="repeat" description="LRR 5">
    <location>
        <begin position="160"/>
        <end position="181"/>
    </location>
</feature>
<feature type="repeat" description="LRR 6">
    <location>
        <begin position="185"/>
        <end position="205"/>
    </location>
</feature>
<feature type="repeat" description="LRR 7">
    <location>
        <begin position="206"/>
        <end position="227"/>
    </location>
</feature>
<feature type="repeat" description="LRR 8">
    <location>
        <begin position="230"/>
        <end position="250"/>
    </location>
</feature>
<feature type="repeat" description="LRR 9">
    <location>
        <begin position="255"/>
        <end position="276"/>
    </location>
</feature>
<feature type="repeat" description="LRR 10">
    <location>
        <begin position="277"/>
        <end position="296"/>
    </location>
</feature>
<feature type="repeat" description="LRR 11">
    <location>
        <begin position="305"/>
        <end position="326"/>
    </location>
</feature>
<feature type="modified residue" description="Pyrrolidone carboxylic acid" evidence="2">
    <location>
        <position position="19"/>
    </location>
</feature>
<feature type="modified residue" description="Sulfotyrosine" evidence="3">
    <location>
        <position position="20"/>
    </location>
</feature>
<feature type="modified residue" description="Sulfotyrosine" evidence="3">
    <location>
        <position position="21"/>
    </location>
</feature>
<feature type="modified residue" description="Sulfotyrosine" evidence="3">
    <location>
        <position position="23"/>
    </location>
</feature>
<feature type="modified residue" description="Sulfotyrosine" evidence="3">
    <location>
        <position position="30"/>
    </location>
</feature>
<feature type="modified residue" description="Phosphoserine" evidence="7">
    <location>
        <position position="304"/>
    </location>
</feature>
<feature type="glycosylation site" description="N-linked (GlcNAc...) (keratan sulfate) asparagine" evidence="5">
    <location>
        <position position="88"/>
    </location>
</feature>
<feature type="glycosylation site" description="N-linked (GlcNAc...) (keratan sulfate) asparagine" evidence="5">
    <location>
        <position position="127"/>
    </location>
</feature>
<feature type="glycosylation site" description="N-linked (GlcNAc...) (keratan sulfate) asparagine" evidence="5">
    <location>
        <position position="160"/>
    </location>
</feature>
<feature type="glycosylation site" description="N-linked (GlcNAc...) (keratan sulfate) asparagine" evidence="5">
    <location>
        <position position="252"/>
    </location>
</feature>
<feature type="disulfide bond" evidence="1">
    <location>
        <begin position="295"/>
        <end position="328"/>
    </location>
</feature>